<feature type="chain" id="PRO_1000052153" description="Large ribosomal subunit protein uL3">
    <location>
        <begin position="1"/>
        <end position="208"/>
    </location>
</feature>
<feature type="region of interest" description="Disordered" evidence="2">
    <location>
        <begin position="116"/>
        <end position="148"/>
    </location>
</feature>
<sequence>MTKGILGKKVGMTQIFTESGEFIPVTVIEATPNVVLQVKTVETDGYEAVQVGFDDKREVLSNKPAKGHVAKANTAPKRFIREFKNIEGLEVGAELSVEQFEAGDVVDVTGTSKGKGFQGVIKRHGQSRGPMAHGSRYHRRPGSMGPVAPNRVFKNKRLAGRMGGNRVTVQNLEIVQVIPEKNVILIKGNVPGAKKSLITIKSAVKAAK</sequence>
<comment type="function">
    <text evidence="1">One of the primary rRNA binding proteins, it binds directly near the 3'-end of the 23S rRNA, where it nucleates assembly of the 50S subunit.</text>
</comment>
<comment type="subunit">
    <text evidence="1">Part of the 50S ribosomal subunit. Forms a cluster with proteins L14 and L19.</text>
</comment>
<comment type="similarity">
    <text evidence="1">Belongs to the universal ribosomal protein uL3 family.</text>
</comment>
<dbReference type="EMBL" id="CP000260">
    <property type="protein sequence ID" value="ABF33111.1"/>
    <property type="molecule type" value="Genomic_DNA"/>
</dbReference>
<dbReference type="RefSeq" id="WP_002987739.1">
    <property type="nucleotide sequence ID" value="NZ_CVUH01000001.1"/>
</dbReference>
<dbReference type="SMR" id="Q1JJ62"/>
<dbReference type="KEGG" id="sph:MGAS10270_Spy0046"/>
<dbReference type="HOGENOM" id="CLU_044142_4_1_9"/>
<dbReference type="Proteomes" id="UP000002436">
    <property type="component" value="Chromosome"/>
</dbReference>
<dbReference type="GO" id="GO:0022625">
    <property type="term" value="C:cytosolic large ribosomal subunit"/>
    <property type="evidence" value="ECO:0007669"/>
    <property type="project" value="TreeGrafter"/>
</dbReference>
<dbReference type="GO" id="GO:0019843">
    <property type="term" value="F:rRNA binding"/>
    <property type="evidence" value="ECO:0007669"/>
    <property type="project" value="UniProtKB-UniRule"/>
</dbReference>
<dbReference type="GO" id="GO:0003735">
    <property type="term" value="F:structural constituent of ribosome"/>
    <property type="evidence" value="ECO:0007669"/>
    <property type="project" value="InterPro"/>
</dbReference>
<dbReference type="GO" id="GO:0006412">
    <property type="term" value="P:translation"/>
    <property type="evidence" value="ECO:0007669"/>
    <property type="project" value="UniProtKB-UniRule"/>
</dbReference>
<dbReference type="FunFam" id="2.40.30.10:FF:000004">
    <property type="entry name" value="50S ribosomal protein L3"/>
    <property type="match status" value="1"/>
</dbReference>
<dbReference type="FunFam" id="3.30.160.810:FF:000002">
    <property type="entry name" value="50S ribosomal protein L3"/>
    <property type="match status" value="1"/>
</dbReference>
<dbReference type="Gene3D" id="3.30.160.810">
    <property type="match status" value="1"/>
</dbReference>
<dbReference type="Gene3D" id="2.40.30.10">
    <property type="entry name" value="Translation factors"/>
    <property type="match status" value="1"/>
</dbReference>
<dbReference type="HAMAP" id="MF_01325_B">
    <property type="entry name" value="Ribosomal_uL3_B"/>
    <property type="match status" value="1"/>
</dbReference>
<dbReference type="InterPro" id="IPR000597">
    <property type="entry name" value="Ribosomal_uL3"/>
</dbReference>
<dbReference type="InterPro" id="IPR019927">
    <property type="entry name" value="Ribosomal_uL3_bac/org-type"/>
</dbReference>
<dbReference type="InterPro" id="IPR019926">
    <property type="entry name" value="Ribosomal_uL3_CS"/>
</dbReference>
<dbReference type="InterPro" id="IPR009000">
    <property type="entry name" value="Transl_B-barrel_sf"/>
</dbReference>
<dbReference type="NCBIfam" id="TIGR03625">
    <property type="entry name" value="L3_bact"/>
    <property type="match status" value="1"/>
</dbReference>
<dbReference type="PANTHER" id="PTHR11229">
    <property type="entry name" value="50S RIBOSOMAL PROTEIN L3"/>
    <property type="match status" value="1"/>
</dbReference>
<dbReference type="PANTHER" id="PTHR11229:SF16">
    <property type="entry name" value="LARGE RIBOSOMAL SUBUNIT PROTEIN UL3C"/>
    <property type="match status" value="1"/>
</dbReference>
<dbReference type="Pfam" id="PF00297">
    <property type="entry name" value="Ribosomal_L3"/>
    <property type="match status" value="1"/>
</dbReference>
<dbReference type="SUPFAM" id="SSF50447">
    <property type="entry name" value="Translation proteins"/>
    <property type="match status" value="1"/>
</dbReference>
<dbReference type="PROSITE" id="PS00474">
    <property type="entry name" value="RIBOSOMAL_L3"/>
    <property type="match status" value="1"/>
</dbReference>
<proteinExistence type="inferred from homology"/>
<keyword id="KW-0687">Ribonucleoprotein</keyword>
<keyword id="KW-0689">Ribosomal protein</keyword>
<keyword id="KW-0694">RNA-binding</keyword>
<keyword id="KW-0699">rRNA-binding</keyword>
<evidence type="ECO:0000255" key="1">
    <source>
        <dbReference type="HAMAP-Rule" id="MF_01325"/>
    </source>
</evidence>
<evidence type="ECO:0000256" key="2">
    <source>
        <dbReference type="SAM" id="MobiDB-lite"/>
    </source>
</evidence>
<evidence type="ECO:0000305" key="3"/>
<protein>
    <recommendedName>
        <fullName evidence="1">Large ribosomal subunit protein uL3</fullName>
    </recommendedName>
    <alternativeName>
        <fullName evidence="3">50S ribosomal protein L3</fullName>
    </alternativeName>
</protein>
<name>RL3_STRPD</name>
<organism>
    <name type="scientific">Streptococcus pyogenes serotype M2 (strain MGAS10270)</name>
    <dbReference type="NCBI Taxonomy" id="370552"/>
    <lineage>
        <taxon>Bacteria</taxon>
        <taxon>Bacillati</taxon>
        <taxon>Bacillota</taxon>
        <taxon>Bacilli</taxon>
        <taxon>Lactobacillales</taxon>
        <taxon>Streptococcaceae</taxon>
        <taxon>Streptococcus</taxon>
    </lineage>
</organism>
<gene>
    <name evidence="1" type="primary">rplC</name>
    <name type="ordered locus">MGAS10270_Spy0046</name>
</gene>
<reference key="1">
    <citation type="journal article" date="2006" name="Proc. Natl. Acad. Sci. U.S.A.">
        <title>Molecular genetic anatomy of inter- and intraserotype variation in the human bacterial pathogen group A Streptococcus.</title>
        <authorList>
            <person name="Beres S.B."/>
            <person name="Richter E.W."/>
            <person name="Nagiec M.J."/>
            <person name="Sumby P."/>
            <person name="Porcella S.F."/>
            <person name="DeLeo F.R."/>
            <person name="Musser J.M."/>
        </authorList>
    </citation>
    <scope>NUCLEOTIDE SEQUENCE [LARGE SCALE GENOMIC DNA]</scope>
    <source>
        <strain>MGAS10270</strain>
    </source>
</reference>
<accession>Q1JJ62</accession>